<sequence>MAKEKFERSKPHVNVGTIGHVDHGKTTLTAAITKVMAEKNGGMARKFDEIDSAPEEKARGITINTSHVEYESPNRHYAHVDCPGHADYVKNMITGAAQMDGAILVCSAADGPMPQTREHILLSRQVGVPKIVVFLNKCDMVDDEELLELVEMEVRELLDQYEFPGDDTPVIMGSALRAIEGDEAYVEKIVELVQAMDDYIPAPERDTEKPFILPIEDVFSISGRGTVVTGRIERGVVNVGDEVEVVGIRPTQKTTVTGVEMFRKLLDRGEAGDNVGILVRGLKRDDVERGQVLCKPGSIKPHTKFEAEVYVLSKEEGGRHTPFFKGYRPQFYFRTTDITGAVELPEGVEMVMPGDNVKMTITLINPIAMDEGLRFAIREGGRTVGAGVVAKIIE</sequence>
<protein>
    <recommendedName>
        <fullName evidence="2">Elongation factor Tu</fullName>
        <shortName evidence="2">EF-Tu</shortName>
        <ecNumber evidence="2">3.6.5.3</ecNumber>
    </recommendedName>
</protein>
<dbReference type="EC" id="3.6.5.3" evidence="2"/>
<dbReference type="EMBL" id="CP000608">
    <property type="protein sequence ID" value="ABO46194.1"/>
    <property type="molecule type" value="Genomic_DNA"/>
</dbReference>
<dbReference type="RefSeq" id="WP_003024794.1">
    <property type="nucleotide sequence ID" value="NC_009257.1"/>
</dbReference>
<dbReference type="SMR" id="A4IW92"/>
<dbReference type="KEGG" id="ftw:FTW_0227"/>
<dbReference type="HOGENOM" id="CLU_007265_0_0_6"/>
<dbReference type="GO" id="GO:0005829">
    <property type="term" value="C:cytosol"/>
    <property type="evidence" value="ECO:0007669"/>
    <property type="project" value="TreeGrafter"/>
</dbReference>
<dbReference type="GO" id="GO:0005525">
    <property type="term" value="F:GTP binding"/>
    <property type="evidence" value="ECO:0007669"/>
    <property type="project" value="UniProtKB-UniRule"/>
</dbReference>
<dbReference type="GO" id="GO:0003924">
    <property type="term" value="F:GTPase activity"/>
    <property type="evidence" value="ECO:0007669"/>
    <property type="project" value="InterPro"/>
</dbReference>
<dbReference type="GO" id="GO:0097216">
    <property type="term" value="F:guanosine tetraphosphate binding"/>
    <property type="evidence" value="ECO:0007669"/>
    <property type="project" value="UniProtKB-ARBA"/>
</dbReference>
<dbReference type="GO" id="GO:0003746">
    <property type="term" value="F:translation elongation factor activity"/>
    <property type="evidence" value="ECO:0007669"/>
    <property type="project" value="UniProtKB-UniRule"/>
</dbReference>
<dbReference type="CDD" id="cd01884">
    <property type="entry name" value="EF_Tu"/>
    <property type="match status" value="1"/>
</dbReference>
<dbReference type="CDD" id="cd03697">
    <property type="entry name" value="EFTU_II"/>
    <property type="match status" value="1"/>
</dbReference>
<dbReference type="CDD" id="cd03707">
    <property type="entry name" value="EFTU_III"/>
    <property type="match status" value="1"/>
</dbReference>
<dbReference type="FunFam" id="2.40.30.10:FF:000001">
    <property type="entry name" value="Elongation factor Tu"/>
    <property type="match status" value="1"/>
</dbReference>
<dbReference type="FunFam" id="3.40.50.300:FF:000003">
    <property type="entry name" value="Elongation factor Tu"/>
    <property type="match status" value="1"/>
</dbReference>
<dbReference type="Gene3D" id="3.40.50.300">
    <property type="entry name" value="P-loop containing nucleotide triphosphate hydrolases"/>
    <property type="match status" value="1"/>
</dbReference>
<dbReference type="Gene3D" id="2.40.30.10">
    <property type="entry name" value="Translation factors"/>
    <property type="match status" value="2"/>
</dbReference>
<dbReference type="HAMAP" id="MF_00118_B">
    <property type="entry name" value="EF_Tu_B"/>
    <property type="match status" value="1"/>
</dbReference>
<dbReference type="InterPro" id="IPR041709">
    <property type="entry name" value="EF-Tu_GTP-bd"/>
</dbReference>
<dbReference type="InterPro" id="IPR050055">
    <property type="entry name" value="EF-Tu_GTPase"/>
</dbReference>
<dbReference type="InterPro" id="IPR004161">
    <property type="entry name" value="EFTu-like_2"/>
</dbReference>
<dbReference type="InterPro" id="IPR033720">
    <property type="entry name" value="EFTU_2"/>
</dbReference>
<dbReference type="InterPro" id="IPR031157">
    <property type="entry name" value="G_TR_CS"/>
</dbReference>
<dbReference type="InterPro" id="IPR027417">
    <property type="entry name" value="P-loop_NTPase"/>
</dbReference>
<dbReference type="InterPro" id="IPR005225">
    <property type="entry name" value="Small_GTP-bd"/>
</dbReference>
<dbReference type="InterPro" id="IPR000795">
    <property type="entry name" value="T_Tr_GTP-bd_dom"/>
</dbReference>
<dbReference type="InterPro" id="IPR009000">
    <property type="entry name" value="Transl_B-barrel_sf"/>
</dbReference>
<dbReference type="InterPro" id="IPR009001">
    <property type="entry name" value="Transl_elong_EF1A/Init_IF2_C"/>
</dbReference>
<dbReference type="InterPro" id="IPR004541">
    <property type="entry name" value="Transl_elong_EFTu/EF1A_bac/org"/>
</dbReference>
<dbReference type="InterPro" id="IPR004160">
    <property type="entry name" value="Transl_elong_EFTu/EF1A_C"/>
</dbReference>
<dbReference type="NCBIfam" id="TIGR00485">
    <property type="entry name" value="EF-Tu"/>
    <property type="match status" value="1"/>
</dbReference>
<dbReference type="NCBIfam" id="NF000766">
    <property type="entry name" value="PRK00049.1"/>
    <property type="match status" value="1"/>
</dbReference>
<dbReference type="NCBIfam" id="NF009372">
    <property type="entry name" value="PRK12735.1"/>
    <property type="match status" value="1"/>
</dbReference>
<dbReference type="NCBIfam" id="NF009373">
    <property type="entry name" value="PRK12736.1"/>
    <property type="match status" value="1"/>
</dbReference>
<dbReference type="NCBIfam" id="TIGR00231">
    <property type="entry name" value="small_GTP"/>
    <property type="match status" value="1"/>
</dbReference>
<dbReference type="PANTHER" id="PTHR43721:SF22">
    <property type="entry name" value="ELONGATION FACTOR TU, MITOCHONDRIAL"/>
    <property type="match status" value="1"/>
</dbReference>
<dbReference type="PANTHER" id="PTHR43721">
    <property type="entry name" value="ELONGATION FACTOR TU-RELATED"/>
    <property type="match status" value="1"/>
</dbReference>
<dbReference type="Pfam" id="PF00009">
    <property type="entry name" value="GTP_EFTU"/>
    <property type="match status" value="1"/>
</dbReference>
<dbReference type="Pfam" id="PF03144">
    <property type="entry name" value="GTP_EFTU_D2"/>
    <property type="match status" value="1"/>
</dbReference>
<dbReference type="Pfam" id="PF03143">
    <property type="entry name" value="GTP_EFTU_D3"/>
    <property type="match status" value="1"/>
</dbReference>
<dbReference type="PRINTS" id="PR00315">
    <property type="entry name" value="ELONGATNFCT"/>
</dbReference>
<dbReference type="SUPFAM" id="SSF50465">
    <property type="entry name" value="EF-Tu/eEF-1alpha/eIF2-gamma C-terminal domain"/>
    <property type="match status" value="1"/>
</dbReference>
<dbReference type="SUPFAM" id="SSF52540">
    <property type="entry name" value="P-loop containing nucleoside triphosphate hydrolases"/>
    <property type="match status" value="1"/>
</dbReference>
<dbReference type="SUPFAM" id="SSF50447">
    <property type="entry name" value="Translation proteins"/>
    <property type="match status" value="1"/>
</dbReference>
<dbReference type="PROSITE" id="PS00301">
    <property type="entry name" value="G_TR_1"/>
    <property type="match status" value="1"/>
</dbReference>
<dbReference type="PROSITE" id="PS51722">
    <property type="entry name" value="G_TR_2"/>
    <property type="match status" value="1"/>
</dbReference>
<reference key="1">
    <citation type="journal article" date="2007" name="PLoS ONE">
        <title>Complete genomic characterization of a pathogenic A.II strain of Francisella tularensis subspecies tularensis.</title>
        <authorList>
            <person name="Beckstrom-Sternberg S.M."/>
            <person name="Auerbach R.K."/>
            <person name="Godbole S."/>
            <person name="Pearson J.V."/>
            <person name="Beckstrom-Sternberg J.S."/>
            <person name="Deng Z."/>
            <person name="Munk C."/>
            <person name="Kubota K."/>
            <person name="Zhou Y."/>
            <person name="Bruce D."/>
            <person name="Noronha J."/>
            <person name="Scheuermann R.H."/>
            <person name="Wang A."/>
            <person name="Wei X."/>
            <person name="Wang J."/>
            <person name="Hao J."/>
            <person name="Wagner D.M."/>
            <person name="Brettin T.S."/>
            <person name="Brown N."/>
            <person name="Gilna P."/>
            <person name="Keim P.S."/>
        </authorList>
    </citation>
    <scope>NUCLEOTIDE SEQUENCE [LARGE SCALE GENOMIC DNA]</scope>
    <source>
        <strain>WY96-3418</strain>
    </source>
</reference>
<organism>
    <name type="scientific">Francisella tularensis subsp. tularensis (strain WY96-3418)</name>
    <dbReference type="NCBI Taxonomy" id="418136"/>
    <lineage>
        <taxon>Bacteria</taxon>
        <taxon>Pseudomonadati</taxon>
        <taxon>Pseudomonadota</taxon>
        <taxon>Gammaproteobacteria</taxon>
        <taxon>Thiotrichales</taxon>
        <taxon>Francisellaceae</taxon>
        <taxon>Francisella</taxon>
    </lineage>
</organism>
<feature type="chain" id="PRO_1000015665" description="Elongation factor Tu">
    <location>
        <begin position="1"/>
        <end position="394"/>
    </location>
</feature>
<feature type="domain" description="tr-type G">
    <location>
        <begin position="10"/>
        <end position="204"/>
    </location>
</feature>
<feature type="region of interest" description="G1" evidence="1">
    <location>
        <begin position="19"/>
        <end position="26"/>
    </location>
</feature>
<feature type="region of interest" description="G2" evidence="1">
    <location>
        <begin position="60"/>
        <end position="64"/>
    </location>
</feature>
<feature type="region of interest" description="G3" evidence="1">
    <location>
        <begin position="81"/>
        <end position="84"/>
    </location>
</feature>
<feature type="region of interest" description="G4" evidence="1">
    <location>
        <begin position="136"/>
        <end position="139"/>
    </location>
</feature>
<feature type="region of interest" description="G5" evidence="1">
    <location>
        <begin position="174"/>
        <end position="176"/>
    </location>
</feature>
<feature type="binding site" evidence="2">
    <location>
        <begin position="19"/>
        <end position="26"/>
    </location>
    <ligand>
        <name>GTP</name>
        <dbReference type="ChEBI" id="CHEBI:37565"/>
    </ligand>
</feature>
<feature type="binding site" evidence="2">
    <location>
        <position position="26"/>
    </location>
    <ligand>
        <name>Mg(2+)</name>
        <dbReference type="ChEBI" id="CHEBI:18420"/>
    </ligand>
</feature>
<feature type="binding site" evidence="2">
    <location>
        <begin position="81"/>
        <end position="85"/>
    </location>
    <ligand>
        <name>GTP</name>
        <dbReference type="ChEBI" id="CHEBI:37565"/>
    </ligand>
</feature>
<feature type="binding site" evidence="2">
    <location>
        <begin position="136"/>
        <end position="139"/>
    </location>
    <ligand>
        <name>GTP</name>
        <dbReference type="ChEBI" id="CHEBI:37565"/>
    </ligand>
</feature>
<keyword id="KW-0963">Cytoplasm</keyword>
<keyword id="KW-0251">Elongation factor</keyword>
<keyword id="KW-0342">GTP-binding</keyword>
<keyword id="KW-0378">Hydrolase</keyword>
<keyword id="KW-0460">Magnesium</keyword>
<keyword id="KW-0479">Metal-binding</keyword>
<keyword id="KW-0547">Nucleotide-binding</keyword>
<keyword id="KW-0648">Protein biosynthesis</keyword>
<evidence type="ECO:0000250" key="1"/>
<evidence type="ECO:0000255" key="2">
    <source>
        <dbReference type="HAMAP-Rule" id="MF_00118"/>
    </source>
</evidence>
<proteinExistence type="inferred from homology"/>
<name>EFTU_FRATW</name>
<accession>A4IW92</accession>
<comment type="function">
    <text evidence="2">GTP hydrolase that promotes the GTP-dependent binding of aminoacyl-tRNA to the A-site of ribosomes during protein biosynthesis.</text>
</comment>
<comment type="catalytic activity">
    <reaction evidence="2">
        <text>GTP + H2O = GDP + phosphate + H(+)</text>
        <dbReference type="Rhea" id="RHEA:19669"/>
        <dbReference type="ChEBI" id="CHEBI:15377"/>
        <dbReference type="ChEBI" id="CHEBI:15378"/>
        <dbReference type="ChEBI" id="CHEBI:37565"/>
        <dbReference type="ChEBI" id="CHEBI:43474"/>
        <dbReference type="ChEBI" id="CHEBI:58189"/>
        <dbReference type="EC" id="3.6.5.3"/>
    </reaction>
    <physiologicalReaction direction="left-to-right" evidence="2">
        <dbReference type="Rhea" id="RHEA:19670"/>
    </physiologicalReaction>
</comment>
<comment type="subunit">
    <text evidence="2">Monomer.</text>
</comment>
<comment type="subcellular location">
    <subcellularLocation>
        <location evidence="2">Cytoplasm</location>
    </subcellularLocation>
</comment>
<comment type="similarity">
    <text evidence="2">Belongs to the TRAFAC class translation factor GTPase superfamily. Classic translation factor GTPase family. EF-Tu/EF-1A subfamily.</text>
</comment>
<gene>
    <name evidence="2" type="primary">tuf</name>
    <name type="ordered locus">FTW_0227</name>
</gene>